<feature type="chain" id="PRO_0000430445" description="2-(acetamidomethylene)succinate hydrolase">
    <location>
        <begin position="1"/>
        <end position="278"/>
    </location>
</feature>
<feature type="active site" description="Nucleophile" evidence="4">
    <location>
        <position position="106"/>
    </location>
</feature>
<feature type="active site" evidence="4">
    <location>
        <position position="130"/>
    </location>
</feature>
<feature type="active site" evidence="4">
    <location>
        <position position="258"/>
    </location>
</feature>
<feature type="binding site" evidence="2">
    <location>
        <position position="41"/>
    </location>
    <ligand>
        <name>chloride</name>
        <dbReference type="ChEBI" id="CHEBI:17996"/>
    </ligand>
</feature>
<feature type="binding site">
    <location>
        <begin position="106"/>
        <end position="107"/>
    </location>
    <ligand>
        <name>chloride</name>
        <dbReference type="ChEBI" id="CHEBI:17996"/>
    </ligand>
</feature>
<feature type="mutagenesis site" description="Loss of catalytic activity." evidence="2">
    <original>S</original>
    <variation>A</variation>
    <location>
        <position position="106"/>
    </location>
</feature>
<feature type="mutagenesis site" description="Loss of catalytic activity." evidence="2">
    <original>D</original>
    <variation>N</variation>
    <location>
        <position position="130"/>
    </location>
</feature>
<feature type="mutagenesis site" description="Loss of catalytic activity." evidence="2">
    <original>S</original>
    <variation>A</variation>
    <location>
        <position position="230"/>
    </location>
</feature>
<feature type="strand" evidence="5">
    <location>
        <begin position="13"/>
        <end position="18"/>
    </location>
</feature>
<feature type="strand" evidence="5">
    <location>
        <begin position="23"/>
        <end position="29"/>
    </location>
</feature>
<feature type="strand" evidence="5">
    <location>
        <begin position="32"/>
        <end position="38"/>
    </location>
</feature>
<feature type="helix" evidence="5">
    <location>
        <begin position="45"/>
        <end position="48"/>
    </location>
</feature>
<feature type="helix" evidence="5">
    <location>
        <begin position="49"/>
        <end position="53"/>
    </location>
</feature>
<feature type="turn" evidence="5">
    <location>
        <begin position="54"/>
        <end position="58"/>
    </location>
</feature>
<feature type="strand" evidence="5">
    <location>
        <begin position="59"/>
        <end position="64"/>
    </location>
</feature>
<feature type="helix" evidence="5">
    <location>
        <begin position="81"/>
        <end position="95"/>
    </location>
</feature>
<feature type="strand" evidence="5">
    <location>
        <begin position="100"/>
        <end position="105"/>
    </location>
</feature>
<feature type="helix" evidence="5">
    <location>
        <begin position="107"/>
        <end position="118"/>
    </location>
</feature>
<feature type="helix" evidence="5">
    <location>
        <begin position="120"/>
        <end position="122"/>
    </location>
</feature>
<feature type="strand" evidence="5">
    <location>
        <begin position="123"/>
        <end position="130"/>
    </location>
</feature>
<feature type="helix" evidence="5">
    <location>
        <begin position="137"/>
        <end position="146"/>
    </location>
</feature>
<feature type="turn" evidence="5">
    <location>
        <begin position="147"/>
        <end position="150"/>
    </location>
</feature>
<feature type="strand" evidence="5">
    <location>
        <begin position="154"/>
        <end position="156"/>
    </location>
</feature>
<feature type="helix" evidence="5">
    <location>
        <begin position="157"/>
        <end position="167"/>
    </location>
</feature>
<feature type="helix" evidence="5">
    <location>
        <begin position="173"/>
        <end position="182"/>
    </location>
</feature>
<feature type="strand" evidence="5">
    <location>
        <begin position="183"/>
        <end position="187"/>
    </location>
</feature>
<feature type="strand" evidence="5">
    <location>
        <begin position="190"/>
        <end position="195"/>
    </location>
</feature>
<feature type="helix" evidence="5">
    <location>
        <begin position="197"/>
        <end position="206"/>
    </location>
</feature>
<feature type="helix" evidence="5">
    <location>
        <begin position="212"/>
        <end position="217"/>
    </location>
</feature>
<feature type="strand" evidence="5">
    <location>
        <begin position="222"/>
        <end position="227"/>
    </location>
</feature>
<feature type="strand" evidence="5">
    <location>
        <begin position="231"/>
        <end position="233"/>
    </location>
</feature>
<feature type="helix" evidence="5">
    <location>
        <begin position="235"/>
        <end position="244"/>
    </location>
</feature>
<feature type="strand" evidence="5">
    <location>
        <begin position="250"/>
        <end position="253"/>
    </location>
</feature>
<feature type="helix" evidence="5">
    <location>
        <begin position="260"/>
        <end position="263"/>
    </location>
</feature>
<feature type="helix" evidence="5">
    <location>
        <begin position="265"/>
        <end position="277"/>
    </location>
</feature>
<proteinExistence type="evidence at protein level"/>
<accession>Q988D4</accession>
<name>AAMHY_RHILO</name>
<gene>
    <name type="ordered locus">mlr6787</name>
</gene>
<evidence type="ECO:0000269" key="1">
    <source>
    </source>
</evidence>
<evidence type="ECO:0000269" key="2">
    <source>
    </source>
</evidence>
<evidence type="ECO:0000305" key="3"/>
<evidence type="ECO:0000305" key="4">
    <source>
    </source>
</evidence>
<evidence type="ECO:0007829" key="5">
    <source>
        <dbReference type="PDB" id="3KXP"/>
    </source>
</evidence>
<comment type="function">
    <text evidence="1">Catalyzes the final reaction in the degradation of vitamin B6 from (E)-2-(acetamidomethylene)succinate (E-2AMS) to produce succinic semialdehyde, acetate, ammonia and carbon dioxide.</text>
</comment>
<comment type="catalytic activity">
    <reaction evidence="1">
        <text>2-(acetamidomethylene)succinate + 2 H2O + H(+) = succinate semialdehyde + acetate + NH4(+) + CO2</text>
        <dbReference type="Rhea" id="RHEA:10432"/>
        <dbReference type="ChEBI" id="CHEBI:15377"/>
        <dbReference type="ChEBI" id="CHEBI:15378"/>
        <dbReference type="ChEBI" id="CHEBI:16526"/>
        <dbReference type="ChEBI" id="CHEBI:28938"/>
        <dbReference type="ChEBI" id="CHEBI:30089"/>
        <dbReference type="ChEBI" id="CHEBI:57698"/>
        <dbReference type="ChEBI" id="CHEBI:57706"/>
        <dbReference type="EC" id="3.5.1.29"/>
    </reaction>
</comment>
<comment type="biophysicochemical properties">
    <kinetics>
        <KM evidence="1">53.7 uM for 2-(acetamidomethylene)succinate</KM>
        <text>kcat is 307.3 min(-1) for 2-(acetamidomethylene)succinate.</text>
    </kinetics>
    <phDependence>
        <text evidence="1">Optimum pH is 7.0.</text>
    </phDependence>
</comment>
<comment type="pathway">
    <text evidence="1">Cofactor degradation; B6 vitamer degradation.</text>
</comment>
<comment type="subunit">
    <text evidence="1 2">Homodimer.</text>
</comment>
<comment type="similarity">
    <text evidence="3">Belongs to the AB hydrolase superfamily.</text>
</comment>
<protein>
    <recommendedName>
        <fullName>2-(acetamidomethylene)succinate hydrolase</fullName>
        <ecNumber>3.5.1.29</ecNumber>
    </recommendedName>
    <alternativeName>
        <fullName>alpha-(N-acetylaminomethylene)succinic acid amidohydrolase</fullName>
        <shortName>AAMS amidohydrolase</shortName>
    </alternativeName>
</protein>
<keyword id="KW-0002">3D-structure</keyword>
<keyword id="KW-0868">Chloride</keyword>
<keyword id="KW-0903">Direct protein sequencing</keyword>
<keyword id="KW-0378">Hydrolase</keyword>
<sequence length="278" mass="29896">MDMAADIASDHFISRRVDIGRITLNVREKGSGPLMLFFHGITSNSAVFEPLMIRLSDRFTTIAVDQRGHGLSDKPETGYEANDYADDIAGLIRTLARGHAILVGHSLGARNSVTAAAKYPDLVRSVVAIDFTPYIETEALDALEARVNAGSQLFEDIKAVEAYLAGRYPNIPADAIRIRAESGYQPVDGGLRPLASSAAMAQTARGLRSDLVPAYRDVTKPVLIVRGESSKLVSAAALAKTSRLRPDLPVVVVPGADHYVNEVSPEITLKAITNFIDA</sequence>
<organism>
    <name type="scientific">Mesorhizobium japonicum (strain LMG 29417 / CECT 9101 / MAFF 303099)</name>
    <name type="common">Mesorhizobium loti (strain MAFF 303099)</name>
    <dbReference type="NCBI Taxonomy" id="266835"/>
    <lineage>
        <taxon>Bacteria</taxon>
        <taxon>Pseudomonadati</taxon>
        <taxon>Pseudomonadota</taxon>
        <taxon>Alphaproteobacteria</taxon>
        <taxon>Hyphomicrobiales</taxon>
        <taxon>Phyllobacteriaceae</taxon>
        <taxon>Mesorhizobium</taxon>
    </lineage>
</organism>
<reference key="1">
    <citation type="journal article" date="2000" name="DNA Res.">
        <title>Complete genome structure of the nitrogen-fixing symbiotic bacterium Mesorhizobium loti.</title>
        <authorList>
            <person name="Kaneko T."/>
            <person name="Nakamura Y."/>
            <person name="Sato S."/>
            <person name="Asamizu E."/>
            <person name="Kato T."/>
            <person name="Sasamoto S."/>
            <person name="Watanabe A."/>
            <person name="Idesawa K."/>
            <person name="Ishikawa A."/>
            <person name="Kawashima K."/>
            <person name="Kimura T."/>
            <person name="Kishida Y."/>
            <person name="Kiyokawa C."/>
            <person name="Kohara M."/>
            <person name="Matsumoto M."/>
            <person name="Matsuno A."/>
            <person name="Mochizuki Y."/>
            <person name="Nakayama S."/>
            <person name="Nakazaki N."/>
            <person name="Shimpo S."/>
            <person name="Sugimoto M."/>
            <person name="Takeuchi C."/>
            <person name="Yamada M."/>
            <person name="Tabata S."/>
        </authorList>
    </citation>
    <scope>NUCLEOTIDE SEQUENCE [LARGE SCALE GENOMIC DNA]</scope>
    <source>
        <strain>LMG 29417 / CECT 9101 / MAFF 303099</strain>
    </source>
</reference>
<reference key="2">
    <citation type="journal article" date="2008" name="J. Nutr. Sci. Vitaminol.">
        <title>Gene identification and characterization of the pyridoxine degradative enzyme alpha-(N-acetylaminomethylene)succinic acid amidohydrolase from Mesorhizobium loti MAFF303099.</title>
        <authorList>
            <person name="Yuan B."/>
            <person name="Yokochi N."/>
            <person name="Yoshikane Y."/>
            <person name="Ohnishi K."/>
            <person name="Ge F."/>
            <person name="Yagi T."/>
        </authorList>
    </citation>
    <scope>PROTEIN SEQUENCE OF 1-10</scope>
    <scope>FUNCTION</scope>
    <scope>CATALYTIC ACTIVITY</scope>
    <scope>SUBUNIT</scope>
    <scope>BIOPHYSICOCHEMICAL PROPERTIES</scope>
    <scope>PATHWAY</scope>
    <source>
        <strain>LMG 29417 / CECT 9101 / MAFF 303099</strain>
    </source>
</reference>
<reference key="3">
    <citation type="journal article" date="2014" name="PLoS ONE">
        <title>Finding sequences for over 270 orphan enzymes.</title>
        <authorList>
            <person name="Shearer A.G."/>
            <person name="Altman T."/>
            <person name="Rhee C.D."/>
        </authorList>
    </citation>
    <scope>IDENTIFICATION</scope>
</reference>
<reference key="4">
    <citation type="journal article" date="2010" name="Biochemistry">
        <title>Structure determination and characterization of the vitamin B6 degradative enzyme (E)-2-(acetamidomethylene)succinate hydrolase.</title>
        <authorList>
            <person name="McCulloch K.M."/>
            <person name="Mukherjee T."/>
            <person name="Begley T.P."/>
            <person name="Ealick S.E."/>
        </authorList>
    </citation>
    <scope>X-RAY CRYSTALLOGRAPHY (2.26 ANGSTROMS) IN COMPLEX WITH CHLORIDE</scope>
    <scope>SUBUNIT</scope>
    <scope>ACTIVE SITE</scope>
    <scope>MUTAGENESIS OF SER-106; ASP-130 AND SER-230</scope>
    <source>
        <strain>LMG 29417 / CECT 9101 / MAFF 303099</strain>
    </source>
</reference>
<dbReference type="EC" id="3.5.1.29"/>
<dbReference type="EMBL" id="BA000012">
    <property type="protein sequence ID" value="BAB53016.1"/>
    <property type="molecule type" value="Genomic_DNA"/>
</dbReference>
<dbReference type="RefSeq" id="WP_010914326.1">
    <property type="nucleotide sequence ID" value="NC_002678.2"/>
</dbReference>
<dbReference type="PDB" id="3KXP">
    <property type="method" value="X-ray"/>
    <property type="resolution" value="2.26 A"/>
    <property type="chains" value="A/B/C/D/E/F/G/H/I/J/K/L=1-278"/>
</dbReference>
<dbReference type="PDBsum" id="3KXP"/>
<dbReference type="SMR" id="Q988D4"/>
<dbReference type="ESTHER" id="meslo-MLR6787">
    <property type="family name" value="6_AlphaBeta_hydrolase"/>
</dbReference>
<dbReference type="KEGG" id="mlo:mlr6787"/>
<dbReference type="eggNOG" id="COG0596">
    <property type="taxonomic scope" value="Bacteria"/>
</dbReference>
<dbReference type="eggNOG" id="COG2945">
    <property type="taxonomic scope" value="Bacteria"/>
</dbReference>
<dbReference type="HOGENOM" id="CLU_020336_50_4_5"/>
<dbReference type="BioCyc" id="MetaCyc:MONOMER-20510"/>
<dbReference type="BRENDA" id="3.5.1.29">
    <property type="organism ID" value="12422"/>
</dbReference>
<dbReference type="UniPathway" id="UPA00192"/>
<dbReference type="EvolutionaryTrace" id="Q988D4"/>
<dbReference type="Proteomes" id="UP000000552">
    <property type="component" value="Chromosome"/>
</dbReference>
<dbReference type="GO" id="GO:0047411">
    <property type="term" value="F:2-(acetamidomethylene)succinate hydrolase activity"/>
    <property type="evidence" value="ECO:0000314"/>
    <property type="project" value="UniProtKB"/>
</dbReference>
<dbReference type="GO" id="GO:0042803">
    <property type="term" value="F:protein homodimerization activity"/>
    <property type="evidence" value="ECO:0000314"/>
    <property type="project" value="UniProtKB"/>
</dbReference>
<dbReference type="GO" id="GO:0042820">
    <property type="term" value="P:vitamin B6 catabolic process"/>
    <property type="evidence" value="ECO:0000314"/>
    <property type="project" value="UniProtKB"/>
</dbReference>
<dbReference type="FunFam" id="3.40.50.1820:FF:000682">
    <property type="entry name" value="2-(acetamidomethylene)succinate hydrolase"/>
    <property type="match status" value="1"/>
</dbReference>
<dbReference type="Gene3D" id="3.40.50.1820">
    <property type="entry name" value="alpha/beta hydrolase"/>
    <property type="match status" value="1"/>
</dbReference>
<dbReference type="InterPro" id="IPR000073">
    <property type="entry name" value="AB_hydrolase_1"/>
</dbReference>
<dbReference type="InterPro" id="IPR029058">
    <property type="entry name" value="AB_hydrolase_fold"/>
</dbReference>
<dbReference type="InterPro" id="IPR050228">
    <property type="entry name" value="Carboxylesterase_BioH"/>
</dbReference>
<dbReference type="PANTHER" id="PTHR43194">
    <property type="entry name" value="HYDROLASE ALPHA/BETA FOLD FAMILY"/>
    <property type="match status" value="1"/>
</dbReference>
<dbReference type="PANTHER" id="PTHR43194:SF2">
    <property type="entry name" value="PEROXISOMAL MEMBRANE PROTEIN LPX1"/>
    <property type="match status" value="1"/>
</dbReference>
<dbReference type="Pfam" id="PF00561">
    <property type="entry name" value="Abhydrolase_1"/>
    <property type="match status" value="1"/>
</dbReference>
<dbReference type="PRINTS" id="PR00111">
    <property type="entry name" value="ABHYDROLASE"/>
</dbReference>
<dbReference type="SUPFAM" id="SSF53474">
    <property type="entry name" value="alpha/beta-Hydrolases"/>
    <property type="match status" value="1"/>
</dbReference>